<proteinExistence type="evidence at protein level"/>
<organism>
    <name type="scientific">Papaver somniferum</name>
    <name type="common">Opium poppy</name>
    <dbReference type="NCBI Taxonomy" id="3469"/>
    <lineage>
        <taxon>Eukaryota</taxon>
        <taxon>Viridiplantae</taxon>
        <taxon>Streptophyta</taxon>
        <taxon>Embryophyta</taxon>
        <taxon>Tracheophyta</taxon>
        <taxon>Spermatophyta</taxon>
        <taxon>Magnoliopsida</taxon>
        <taxon>Ranunculales</taxon>
        <taxon>Papaveraceae</taxon>
        <taxon>Papaveroideae</taxon>
        <taxon>Papaver</taxon>
    </lineage>
</organism>
<dbReference type="EC" id="1.14.14.163" evidence="4 5"/>
<dbReference type="EMBL" id="JQ659004">
    <property type="protein sequence ID" value="AFB74616.1"/>
    <property type="molecule type" value="Genomic_DNA"/>
</dbReference>
<dbReference type="SMR" id="I3PLR0"/>
<dbReference type="EnsemblPlants" id="RZC84730">
    <property type="protein sequence ID" value="RZC84730"/>
    <property type="gene ID" value="C5167_047514"/>
</dbReference>
<dbReference type="Gramene" id="RZC84730">
    <property type="protein sequence ID" value="RZC84730"/>
    <property type="gene ID" value="C5167_047514"/>
</dbReference>
<dbReference type="KEGG" id="ag:AFB74616"/>
<dbReference type="OrthoDB" id="442633at2759"/>
<dbReference type="BioCyc" id="MetaCyc:MONOMER-17769"/>
<dbReference type="BRENDA" id="1.14.14.163">
    <property type="organism ID" value="4515"/>
</dbReference>
<dbReference type="SABIO-RK" id="I3PLR0"/>
<dbReference type="GO" id="GO:0016020">
    <property type="term" value="C:membrane"/>
    <property type="evidence" value="ECO:0007669"/>
    <property type="project" value="UniProtKB-SubCell"/>
</dbReference>
<dbReference type="GO" id="GO:0020037">
    <property type="term" value="F:heme binding"/>
    <property type="evidence" value="ECO:0007669"/>
    <property type="project" value="InterPro"/>
</dbReference>
<dbReference type="GO" id="GO:0005506">
    <property type="term" value="F:iron ion binding"/>
    <property type="evidence" value="ECO:0007669"/>
    <property type="project" value="InterPro"/>
</dbReference>
<dbReference type="GO" id="GO:0004497">
    <property type="term" value="F:monooxygenase activity"/>
    <property type="evidence" value="ECO:0007669"/>
    <property type="project" value="UniProtKB-KW"/>
</dbReference>
<dbReference type="GO" id="GO:0016705">
    <property type="term" value="F:oxidoreductase activity, acting on paired donors, with incorporation or reduction of molecular oxygen"/>
    <property type="evidence" value="ECO:0007669"/>
    <property type="project" value="InterPro"/>
</dbReference>
<dbReference type="GO" id="GO:0033075">
    <property type="term" value="P:isoquinoline alkaloid biosynthetic process"/>
    <property type="evidence" value="ECO:0007669"/>
    <property type="project" value="UniProtKB-ARBA"/>
</dbReference>
<dbReference type="CDD" id="cd20654">
    <property type="entry name" value="CYP82"/>
    <property type="match status" value="1"/>
</dbReference>
<dbReference type="FunFam" id="1.10.630.10:FF:000026">
    <property type="entry name" value="Cytochrome P450 82C4"/>
    <property type="match status" value="1"/>
</dbReference>
<dbReference type="Gene3D" id="1.10.630.10">
    <property type="entry name" value="Cytochrome P450"/>
    <property type="match status" value="1"/>
</dbReference>
<dbReference type="InterPro" id="IPR001128">
    <property type="entry name" value="Cyt_P450"/>
</dbReference>
<dbReference type="InterPro" id="IPR017972">
    <property type="entry name" value="Cyt_P450_CS"/>
</dbReference>
<dbReference type="InterPro" id="IPR002401">
    <property type="entry name" value="Cyt_P450_E_grp-I"/>
</dbReference>
<dbReference type="InterPro" id="IPR036396">
    <property type="entry name" value="Cyt_P450_sf"/>
</dbReference>
<dbReference type="InterPro" id="IPR050651">
    <property type="entry name" value="Plant_Cytochrome_P450_Monoox"/>
</dbReference>
<dbReference type="PANTHER" id="PTHR47947:SF26">
    <property type="entry name" value="CYTOCHROME P450"/>
    <property type="match status" value="1"/>
</dbReference>
<dbReference type="PANTHER" id="PTHR47947">
    <property type="entry name" value="CYTOCHROME P450 82C3-RELATED"/>
    <property type="match status" value="1"/>
</dbReference>
<dbReference type="Pfam" id="PF00067">
    <property type="entry name" value="p450"/>
    <property type="match status" value="1"/>
</dbReference>
<dbReference type="PRINTS" id="PR00463">
    <property type="entry name" value="EP450I"/>
</dbReference>
<dbReference type="PRINTS" id="PR00385">
    <property type="entry name" value="P450"/>
</dbReference>
<dbReference type="SUPFAM" id="SSF48264">
    <property type="entry name" value="Cytochrome P450"/>
    <property type="match status" value="1"/>
</dbReference>
<dbReference type="PROSITE" id="PS00086">
    <property type="entry name" value="CYTOCHROME_P450"/>
    <property type="match status" value="1"/>
</dbReference>
<keyword id="KW-0017">Alkaloid metabolism</keyword>
<keyword id="KW-0349">Heme</keyword>
<keyword id="KW-0408">Iron</keyword>
<keyword id="KW-0472">Membrane</keyword>
<keyword id="KW-0479">Metal-binding</keyword>
<keyword id="KW-0503">Monooxygenase</keyword>
<keyword id="KW-0560">Oxidoreductase</keyword>
<keyword id="KW-0812">Transmembrane</keyword>
<keyword id="KW-1133">Transmembrane helix</keyword>
<comment type="function">
    <text evidence="4 5 6">Cytochrome P450 involved in the biosynthesis of the benzylisoquinoline alkaloid noscapine (PubMed:25485687, PubMed:27378283, PubMed:29610307). Converts (S)-1-hydroxy-N-methylcanadine to (13S,14R)-1,13-dihydroxy-N-methylcanadine (PubMed:25485687, PubMed:27378283).</text>
</comment>
<comment type="catalytic activity">
    <reaction evidence="4 5">
        <text>(S)-1-hydroxy-N-methylcanadine + reduced [NADPH--hemoprotein reductase] + O2 = (13S,14R)-1,13-dihydroxy-N-methylcanadine + oxidized [NADPH--hemoprotein reductase] + H2O + H(+)</text>
        <dbReference type="Rhea" id="RHEA:57380"/>
        <dbReference type="Rhea" id="RHEA-COMP:11964"/>
        <dbReference type="Rhea" id="RHEA-COMP:11965"/>
        <dbReference type="ChEBI" id="CHEBI:15377"/>
        <dbReference type="ChEBI" id="CHEBI:15378"/>
        <dbReference type="ChEBI" id="CHEBI:15379"/>
        <dbReference type="ChEBI" id="CHEBI:57618"/>
        <dbReference type="ChEBI" id="CHEBI:58210"/>
        <dbReference type="ChEBI" id="CHEBI:141633"/>
        <dbReference type="ChEBI" id="CHEBI:141639"/>
        <dbReference type="EC" id="1.14.14.163"/>
    </reaction>
    <physiologicalReaction direction="left-to-right" evidence="9">
        <dbReference type="Rhea" id="RHEA:57381"/>
    </physiologicalReaction>
</comment>
<comment type="cofactor">
    <cofactor evidence="1">
        <name>heme</name>
        <dbReference type="ChEBI" id="CHEBI:30413"/>
    </cofactor>
</comment>
<comment type="biophysicochemical properties">
    <kinetics>
        <KM evidence="4">10.6 uM for (S)-1-hydroxy-N-methylcanadine</KM>
        <Vmax evidence="4">34.7 nmol/min/mg enzyme with (S)-1-hydroxy-N-methylcanadine as substrate</Vmax>
    </kinetics>
</comment>
<comment type="pathway">
    <text evidence="8">Alkaloid biosynthesis.</text>
</comment>
<comment type="subcellular location">
    <subcellularLocation>
        <location evidence="2">Membrane</location>
        <topology evidence="2">Single-pass membrane protein</topology>
    </subcellularLocation>
</comment>
<comment type="tissue specificity">
    <text evidence="3">Highly expressed in capsules (PubMed:22653730). Expressed is stems (PubMed:22653730).</text>
</comment>
<comment type="similarity">
    <text evidence="8">Belongs to the cytochrome P450 family.</text>
</comment>
<sequence>MKSLMMNKLLFLQRITDSPSTTIISTFIVTIISIVFLYTVLLIRTTKNKQKIAAPKASGAWPFIGHLKLFMKQDTQFYRTLGTMSDKYGSVFTLRLGNQAILVVSNWEMVKECFTTNDKSFSNRPSTLSTKYMLNDTNSVVFSPYGTYWREMRKILVQKLLISNQRSEALKNLKTKEIDNSFVKLNDLCNNDVSGGGTKVRMDEWLADMMFNIIARITFGYQSGGGDAPGASTTSKNVERYKKTLDEMFVVLATRFAVSDIFPSLEFIDRLRGLVKDMKILGDELNSIAGCFIEEHRQKRRESLSSLLSLSNESVGDEQDFIDVLLSIMDQSRLPGDDPDFIIKIMILEAFAGGTDSLSATLTWVLSLLLNHPNVLKRAREEIDRHVENGKQVEVSDIPKLGYIDAIIKETMRLYPVGALSERYTTEECEVGRFNVPAGTRLLVNIWKIHRDPSVWENPSDFQPERFLCSDKVGVDLYGQNYELIPFGAGRRVCPAIVSSLQTMHYALARLIQGYEMKSASLDGKVNMEEMIAMSCHKMSPLEVIISPREPRRS</sequence>
<name>C82X2_PAPSO</name>
<reference key="1">
    <citation type="journal article" date="2012" name="Science">
        <title>A Papaver somniferum 10-gene cluster for synthesis of the anticancer alkaloid noscapine.</title>
        <authorList>
            <person name="Winzer T."/>
            <person name="Gazda V."/>
            <person name="He Z."/>
            <person name="Kaminski F."/>
            <person name="Kern M."/>
            <person name="Larson T.R."/>
            <person name="Li Y."/>
            <person name="Meade F."/>
            <person name="Teodor R."/>
            <person name="Vaistij F.E."/>
            <person name="Walker C."/>
            <person name="Bowser T.A."/>
            <person name="Graham I.A."/>
        </authorList>
    </citation>
    <scope>NUCLEOTIDE SEQUENCE [GENOMIC DNA]</scope>
    <scope>TISSUE SPECIFICITY</scope>
</reference>
<reference key="2">
    <citation type="journal article" date="2015" name="Nat. Chem. Biol.">
        <title>Acetylation serves as a protective group in noscapine biosynthesis in opium poppy.</title>
        <authorList>
            <person name="Dang T.T."/>
            <person name="Chen X."/>
            <person name="Facchini P.J."/>
        </authorList>
    </citation>
    <scope>FUNCTION</scope>
    <scope>CATALYTIC ACTIVITY</scope>
    <scope>BIOPHYSICOCHEMICAL PROPERTIES</scope>
</reference>
<reference key="3">
    <citation type="journal article" date="2016" name="Nat. Commun.">
        <title>Engineering biosynthesis of the anticancer alkaloid noscapine in yeast.</title>
        <authorList>
            <person name="Li Y."/>
            <person name="Smolke C.D."/>
        </authorList>
    </citation>
    <scope>FUNCTION</scope>
    <scope>CATALYTIC ACTIVITY</scope>
</reference>
<reference key="4">
    <citation type="journal article" date="2018" name="Proc. Natl. Acad. Sci. U.S.A.">
        <title>Complete biosynthesis of noscapine and halogenated alkaloids in yeast.</title>
        <authorList>
            <person name="Li Y."/>
            <person name="Li S."/>
            <person name="Thodey K."/>
            <person name="Trenchard I."/>
            <person name="Cravens A."/>
            <person name="Smolke C.D."/>
        </authorList>
    </citation>
    <scope>FUNCTION</scope>
</reference>
<gene>
    <name evidence="7" type="primary">CYP82X2</name>
</gene>
<feature type="chain" id="PRO_0000447597" description="(S)-1-hydroxy-N-methylcanadine 13-hydroxylase CYP82X2">
    <location>
        <begin position="1"/>
        <end position="554"/>
    </location>
</feature>
<feature type="transmembrane region" description="Helical" evidence="2">
    <location>
        <begin position="23"/>
        <end position="43"/>
    </location>
</feature>
<feature type="binding site" description="axial binding residue" evidence="1">
    <location>
        <position position="494"/>
    </location>
    <ligand>
        <name>heme</name>
        <dbReference type="ChEBI" id="CHEBI:30413"/>
    </ligand>
    <ligandPart>
        <name>Fe</name>
        <dbReference type="ChEBI" id="CHEBI:18248"/>
    </ligandPart>
</feature>
<evidence type="ECO:0000250" key="1">
    <source>
        <dbReference type="UniProtKB" id="Q96242"/>
    </source>
</evidence>
<evidence type="ECO:0000255" key="2"/>
<evidence type="ECO:0000269" key="3">
    <source>
    </source>
</evidence>
<evidence type="ECO:0000269" key="4">
    <source>
    </source>
</evidence>
<evidence type="ECO:0000269" key="5">
    <source>
    </source>
</evidence>
<evidence type="ECO:0000269" key="6">
    <source>
    </source>
</evidence>
<evidence type="ECO:0000303" key="7">
    <source>
    </source>
</evidence>
<evidence type="ECO:0000305" key="8"/>
<evidence type="ECO:0000305" key="9">
    <source>
    </source>
</evidence>
<protein>
    <recommendedName>
        <fullName evidence="8">(S)-1-hydroxy-N-methylcanadine 13-hydroxylase CYP82X2</fullName>
        <ecNumber evidence="4 5">1.14.14.163</ecNumber>
    </recommendedName>
    <alternativeName>
        <fullName evidence="7">Cytochrome P450 82X2</fullName>
    </alternativeName>
</protein>
<accession>I3PLR0</accession>